<comment type="function">
    <text evidence="2">Calcium-dependent lectin that mediates cell adhesion by binding to glycoproteins on neighboring cells. Mediates the adherence of lymphocytes to endothelial cells of high endothelial venules in peripheral lymph nodes. Promotes initial tethering and rolling of leukocytes in endothelia.</text>
</comment>
<comment type="subunit">
    <text evidence="2">Interaction with SELPLG/PSGL1 and PODXL2 is required for promoting recruitment and rolling of leukocytes. This interaction is dependent on the sialyl Lewis X glycan modification of SELPLG and PODXL2, and tyrosine sulfation modifications of SELPLG. Sulfation on 'Tyr-51' of SELPLG is important for L-selectin binding.</text>
</comment>
<comment type="subcellular location">
    <subcellularLocation>
        <location evidence="2">Cell membrane</location>
        <topology evidence="2">Single-pass type I membrane protein</topology>
    </subcellularLocation>
</comment>
<comment type="PTM">
    <text evidence="2">N-glycosylated.</text>
</comment>
<comment type="similarity">
    <text evidence="7">Belongs to the selectin/LECAM family.</text>
</comment>
<name>LYAM1_MACMU</name>
<sequence>MIFPRKCQSTQRDLWNIFKLWGWTMLCCDFLAHHGTDCWTYHYSENPMNWQKARRFCRENYTDLVAIQNKAEIEYLEKTLPFSPSYYWIGIRKIGGIWTWVGTNKSLTQEAENWGDGEPNNKKNKEDCVEIYIKRKKDAGKWNDDACHKPKAALCYTASCQPWSCSGHGECVEIINNYTCNCDVGYYGPQCQFVIQCEPLEPPKLGTMDCTHPLGDFSFSSQCAFNCSEGTNLTGIEETTCGPFGNWSSPEPTCQVIQCEPLSAPDLGIMNCSHPLASFSFSSACTFSCSEGTELIGEKKTICESSGIWSNPNPICQKLDRSFSMIKEGDYNPLFIPVAVMVTAFSGLAFIIWLARRLKKGKKSKKSMDDPY</sequence>
<gene>
    <name type="primary">SELL</name>
</gene>
<accession>Q95198</accession>
<reference key="1">
    <citation type="submission" date="1996-11" db="EMBL/GenBank/DDBJ databases">
        <title>Cloning of the cDNA encoding L-selectin from nonhuman primates.</title>
        <authorList>
            <person name="Budman J.I."/>
            <person name="Fu H."/>
            <person name="Johnson C.E."/>
            <person name="Thakur A.B."/>
            <person name="Berg E.L."/>
            <person name="Tsurushita N."/>
        </authorList>
    </citation>
    <scope>NUCLEOTIDE SEQUENCE [MRNA]</scope>
</reference>
<proteinExistence type="evidence at transcript level"/>
<protein>
    <recommendedName>
        <fullName>L-selectin</fullName>
    </recommendedName>
    <alternativeName>
        <fullName>CD62 antigen-like family member L</fullName>
    </alternativeName>
    <alternativeName>
        <fullName>Leukocyte adhesion molecule 1</fullName>
        <shortName>LAM-1</shortName>
    </alternativeName>
    <alternativeName>
        <fullName>Leukocyte-endothelial cell adhesion molecule 1</fullName>
        <shortName>LECAM1</shortName>
    </alternativeName>
    <alternativeName>
        <fullName>Lymph node homing receptor</fullName>
    </alternativeName>
    <cdAntigenName>CD62L</cdAntigenName>
</protein>
<organism>
    <name type="scientific">Macaca mulatta</name>
    <name type="common">Rhesus macaque</name>
    <dbReference type="NCBI Taxonomy" id="9544"/>
    <lineage>
        <taxon>Eukaryota</taxon>
        <taxon>Metazoa</taxon>
        <taxon>Chordata</taxon>
        <taxon>Craniata</taxon>
        <taxon>Vertebrata</taxon>
        <taxon>Euteleostomi</taxon>
        <taxon>Mammalia</taxon>
        <taxon>Eutheria</taxon>
        <taxon>Euarchontoglires</taxon>
        <taxon>Primates</taxon>
        <taxon>Haplorrhini</taxon>
        <taxon>Catarrhini</taxon>
        <taxon>Cercopithecidae</taxon>
        <taxon>Cercopithecinae</taxon>
        <taxon>Macaca</taxon>
    </lineage>
</organism>
<dbReference type="EMBL" id="U73730">
    <property type="protein sequence ID" value="AAB18246.1"/>
    <property type="molecule type" value="mRNA"/>
</dbReference>
<dbReference type="RefSeq" id="NP_001036228.1">
    <property type="nucleotide sequence ID" value="NM_001042763.1"/>
</dbReference>
<dbReference type="BMRB" id="Q95198"/>
<dbReference type="SMR" id="Q95198"/>
<dbReference type="FunCoup" id="Q95198">
    <property type="interactions" value="262"/>
</dbReference>
<dbReference type="STRING" id="9544.ENSMMUP00000053784"/>
<dbReference type="GlyCosmos" id="Q95198">
    <property type="glycosylation" value="7 sites, No reported glycans"/>
</dbReference>
<dbReference type="PaxDb" id="9544-ENSMMUP00000021783"/>
<dbReference type="GeneID" id="701419"/>
<dbReference type="KEGG" id="mcc:701419"/>
<dbReference type="CTD" id="6402"/>
<dbReference type="eggNOG" id="KOG4297">
    <property type="taxonomic scope" value="Eukaryota"/>
</dbReference>
<dbReference type="InParanoid" id="Q95198"/>
<dbReference type="OrthoDB" id="406096at2759"/>
<dbReference type="Proteomes" id="UP000006718">
    <property type="component" value="Unassembled WGS sequence"/>
</dbReference>
<dbReference type="GO" id="GO:0009897">
    <property type="term" value="C:external side of plasma membrane"/>
    <property type="evidence" value="ECO:0000318"/>
    <property type="project" value="GO_Central"/>
</dbReference>
<dbReference type="GO" id="GO:0005615">
    <property type="term" value="C:extracellular space"/>
    <property type="evidence" value="ECO:0000318"/>
    <property type="project" value="GO_Central"/>
</dbReference>
<dbReference type="GO" id="GO:0005886">
    <property type="term" value="C:plasma membrane"/>
    <property type="evidence" value="ECO:0000250"/>
    <property type="project" value="UniProtKB"/>
</dbReference>
<dbReference type="GO" id="GO:0005509">
    <property type="term" value="F:calcium ion binding"/>
    <property type="evidence" value="ECO:0000250"/>
    <property type="project" value="UniProtKB"/>
</dbReference>
<dbReference type="GO" id="GO:0070492">
    <property type="term" value="F:oligosaccharide binding"/>
    <property type="evidence" value="ECO:0000250"/>
    <property type="project" value="UniProtKB"/>
</dbReference>
<dbReference type="GO" id="GO:0033691">
    <property type="term" value="F:sialic acid binding"/>
    <property type="evidence" value="ECO:0000318"/>
    <property type="project" value="GO_Central"/>
</dbReference>
<dbReference type="GO" id="GO:0016339">
    <property type="term" value="P:calcium-dependent cell-cell adhesion via plasma membrane cell adhesion molecules"/>
    <property type="evidence" value="ECO:0000250"/>
    <property type="project" value="UniProtKB"/>
</dbReference>
<dbReference type="GO" id="GO:0007157">
    <property type="term" value="P:heterophilic cell-cell adhesion via plasma membrane cell adhesion molecules"/>
    <property type="evidence" value="ECO:0000318"/>
    <property type="project" value="GO_Central"/>
</dbReference>
<dbReference type="GO" id="GO:0050901">
    <property type="term" value="P:leukocyte tethering or rolling"/>
    <property type="evidence" value="ECO:0000250"/>
    <property type="project" value="UniProtKB"/>
</dbReference>
<dbReference type="GO" id="GO:0034097">
    <property type="term" value="P:response to cytokine"/>
    <property type="evidence" value="ECO:0000318"/>
    <property type="project" value="GO_Central"/>
</dbReference>
<dbReference type="CDD" id="cd00033">
    <property type="entry name" value="CCP"/>
    <property type="match status" value="2"/>
</dbReference>
<dbReference type="CDD" id="cd03592">
    <property type="entry name" value="CLECT_selectins_like"/>
    <property type="match status" value="1"/>
</dbReference>
<dbReference type="CDD" id="cd00054">
    <property type="entry name" value="EGF_CA"/>
    <property type="match status" value="1"/>
</dbReference>
<dbReference type="FunFam" id="3.10.100.10:FF:000007">
    <property type="entry name" value="L-selectin"/>
    <property type="match status" value="1"/>
</dbReference>
<dbReference type="FunFam" id="2.10.25.10:FF:000176">
    <property type="entry name" value="Selectin P"/>
    <property type="match status" value="1"/>
</dbReference>
<dbReference type="FunFam" id="2.10.70.10:FF:000001">
    <property type="entry name" value="Selectin P"/>
    <property type="match status" value="2"/>
</dbReference>
<dbReference type="Gene3D" id="2.10.70.10">
    <property type="entry name" value="Complement Module, domain 1"/>
    <property type="match status" value="2"/>
</dbReference>
<dbReference type="Gene3D" id="2.10.25.10">
    <property type="entry name" value="Laminin"/>
    <property type="match status" value="1"/>
</dbReference>
<dbReference type="Gene3D" id="3.10.100.10">
    <property type="entry name" value="Mannose-Binding Protein A, subunit A"/>
    <property type="match status" value="1"/>
</dbReference>
<dbReference type="InterPro" id="IPR001304">
    <property type="entry name" value="C-type_lectin-like"/>
</dbReference>
<dbReference type="InterPro" id="IPR016186">
    <property type="entry name" value="C-type_lectin-like/link_sf"/>
</dbReference>
<dbReference type="InterPro" id="IPR018378">
    <property type="entry name" value="C-type_lectin_CS"/>
</dbReference>
<dbReference type="InterPro" id="IPR050350">
    <property type="entry name" value="Compl-Cell_Adhes-Reg"/>
</dbReference>
<dbReference type="InterPro" id="IPR016187">
    <property type="entry name" value="CTDL_fold"/>
</dbReference>
<dbReference type="InterPro" id="IPR000742">
    <property type="entry name" value="EGF-like_dom"/>
</dbReference>
<dbReference type="InterPro" id="IPR016348">
    <property type="entry name" value="L-selectin"/>
</dbReference>
<dbReference type="InterPro" id="IPR033991">
    <property type="entry name" value="Selectin_CTLD"/>
</dbReference>
<dbReference type="InterPro" id="IPR002396">
    <property type="entry name" value="Selectin_superfamily"/>
</dbReference>
<dbReference type="InterPro" id="IPR035976">
    <property type="entry name" value="Sushi/SCR/CCP_sf"/>
</dbReference>
<dbReference type="InterPro" id="IPR000436">
    <property type="entry name" value="Sushi_SCR_CCP_dom"/>
</dbReference>
<dbReference type="PANTHER" id="PTHR19325">
    <property type="entry name" value="COMPLEMENT COMPONENT-RELATED SUSHI DOMAIN-CONTAINING"/>
    <property type="match status" value="1"/>
</dbReference>
<dbReference type="PANTHER" id="PTHR19325:SF543">
    <property type="entry name" value="L-SELECTIN"/>
    <property type="match status" value="1"/>
</dbReference>
<dbReference type="Pfam" id="PF00008">
    <property type="entry name" value="EGF"/>
    <property type="match status" value="1"/>
</dbReference>
<dbReference type="Pfam" id="PF00059">
    <property type="entry name" value="Lectin_C"/>
    <property type="match status" value="1"/>
</dbReference>
<dbReference type="Pfam" id="PF00084">
    <property type="entry name" value="Sushi"/>
    <property type="match status" value="2"/>
</dbReference>
<dbReference type="PIRSF" id="PIRSF002421">
    <property type="entry name" value="L-selectin"/>
    <property type="match status" value="1"/>
</dbReference>
<dbReference type="PRINTS" id="PR00343">
    <property type="entry name" value="SELECTIN"/>
</dbReference>
<dbReference type="SMART" id="SM00032">
    <property type="entry name" value="CCP"/>
    <property type="match status" value="2"/>
</dbReference>
<dbReference type="SMART" id="SM00034">
    <property type="entry name" value="CLECT"/>
    <property type="match status" value="1"/>
</dbReference>
<dbReference type="SMART" id="SM00181">
    <property type="entry name" value="EGF"/>
    <property type="match status" value="1"/>
</dbReference>
<dbReference type="SUPFAM" id="SSF56436">
    <property type="entry name" value="C-type lectin-like"/>
    <property type="match status" value="1"/>
</dbReference>
<dbReference type="SUPFAM" id="SSF57535">
    <property type="entry name" value="Complement control module/SCR domain"/>
    <property type="match status" value="2"/>
</dbReference>
<dbReference type="SUPFAM" id="SSF57196">
    <property type="entry name" value="EGF/Laminin"/>
    <property type="match status" value="1"/>
</dbReference>
<dbReference type="PROSITE" id="PS00615">
    <property type="entry name" value="C_TYPE_LECTIN_1"/>
    <property type="match status" value="1"/>
</dbReference>
<dbReference type="PROSITE" id="PS50041">
    <property type="entry name" value="C_TYPE_LECTIN_2"/>
    <property type="match status" value="1"/>
</dbReference>
<dbReference type="PROSITE" id="PS00022">
    <property type="entry name" value="EGF_1"/>
    <property type="match status" value="1"/>
</dbReference>
<dbReference type="PROSITE" id="PS01186">
    <property type="entry name" value="EGF_2"/>
    <property type="match status" value="1"/>
</dbReference>
<dbReference type="PROSITE" id="PS50026">
    <property type="entry name" value="EGF_3"/>
    <property type="match status" value="1"/>
</dbReference>
<dbReference type="PROSITE" id="PS50923">
    <property type="entry name" value="SUSHI"/>
    <property type="match status" value="2"/>
</dbReference>
<evidence type="ECO:0000250" key="1"/>
<evidence type="ECO:0000250" key="2">
    <source>
        <dbReference type="UniProtKB" id="P14151"/>
    </source>
</evidence>
<evidence type="ECO:0000255" key="3"/>
<evidence type="ECO:0000255" key="4">
    <source>
        <dbReference type="PROSITE-ProRule" id="PRU00040"/>
    </source>
</evidence>
<evidence type="ECO:0000255" key="5">
    <source>
        <dbReference type="PROSITE-ProRule" id="PRU00076"/>
    </source>
</evidence>
<evidence type="ECO:0000255" key="6">
    <source>
        <dbReference type="PROSITE-ProRule" id="PRU00302"/>
    </source>
</evidence>
<evidence type="ECO:0000305" key="7"/>
<keyword id="KW-0106">Calcium</keyword>
<keyword id="KW-0130">Cell adhesion</keyword>
<keyword id="KW-1003">Cell membrane</keyword>
<keyword id="KW-1015">Disulfide bond</keyword>
<keyword id="KW-0245">EGF-like domain</keyword>
<keyword id="KW-0325">Glycoprotein</keyword>
<keyword id="KW-0430">Lectin</keyword>
<keyword id="KW-0472">Membrane</keyword>
<keyword id="KW-0479">Metal-binding</keyword>
<keyword id="KW-1185">Reference proteome</keyword>
<keyword id="KW-0677">Repeat</keyword>
<keyword id="KW-0732">Signal</keyword>
<keyword id="KW-0768">Sushi</keyword>
<keyword id="KW-0812">Transmembrane</keyword>
<keyword id="KW-1133">Transmembrane helix</keyword>
<feature type="signal peptide" evidence="1">
    <location>
        <begin position="1"/>
        <end position="28"/>
    </location>
</feature>
<feature type="propeptide" id="PRO_0000017477" evidence="1">
    <location>
        <begin position="29"/>
        <end position="38"/>
    </location>
</feature>
<feature type="chain" id="PRO_0000017478" description="L-selectin">
    <location>
        <begin position="39"/>
        <end position="372"/>
    </location>
</feature>
<feature type="topological domain" description="Extracellular" evidence="3">
    <location>
        <begin position="39"/>
        <end position="332"/>
    </location>
</feature>
<feature type="transmembrane region" description="Helical" evidence="3">
    <location>
        <begin position="333"/>
        <end position="355"/>
    </location>
</feature>
<feature type="topological domain" description="Cytoplasmic" evidence="3">
    <location>
        <begin position="356"/>
        <end position="372"/>
    </location>
</feature>
<feature type="domain" description="C-type lectin" evidence="4">
    <location>
        <begin position="55"/>
        <end position="155"/>
    </location>
</feature>
<feature type="domain" description="EGF-like" evidence="5">
    <location>
        <begin position="156"/>
        <end position="192"/>
    </location>
</feature>
<feature type="domain" description="Sushi 1" evidence="6">
    <location>
        <begin position="195"/>
        <end position="256"/>
    </location>
</feature>
<feature type="domain" description="Sushi 2" evidence="6">
    <location>
        <begin position="257"/>
        <end position="318"/>
    </location>
</feature>
<feature type="binding site" evidence="2">
    <location>
        <position position="118"/>
    </location>
    <ligand>
        <name>Ca(2+)</name>
        <dbReference type="ChEBI" id="CHEBI:29108"/>
    </ligand>
</feature>
<feature type="binding site" evidence="2">
    <location>
        <position position="120"/>
    </location>
    <ligand>
        <name>Ca(2+)</name>
        <dbReference type="ChEBI" id="CHEBI:29108"/>
    </ligand>
</feature>
<feature type="binding site" evidence="2">
    <location>
        <position position="126"/>
    </location>
    <ligand>
        <name>Ca(2+)</name>
        <dbReference type="ChEBI" id="CHEBI:29108"/>
    </ligand>
</feature>
<feature type="binding site" evidence="2">
    <location>
        <position position="143"/>
    </location>
    <ligand>
        <name>Ca(2+)</name>
        <dbReference type="ChEBI" id="CHEBI:29108"/>
    </ligand>
</feature>
<feature type="binding site" evidence="2">
    <location>
        <position position="144"/>
    </location>
    <ligand>
        <name>Ca(2+)</name>
        <dbReference type="ChEBI" id="CHEBI:29108"/>
    </ligand>
</feature>
<feature type="glycosylation site" description="N-linked (GlcNAc...) asparagine" evidence="3">
    <location>
        <position position="60"/>
    </location>
</feature>
<feature type="glycosylation site" description="N-linked (GlcNAc...) asparagine" evidence="3">
    <location>
        <position position="104"/>
    </location>
</feature>
<feature type="glycosylation site" description="N-linked (GlcNAc...) asparagine" evidence="3">
    <location>
        <position position="177"/>
    </location>
</feature>
<feature type="glycosylation site" description="N-linked (GlcNAc...) asparagine" evidence="3">
    <location>
        <position position="226"/>
    </location>
</feature>
<feature type="glycosylation site" description="N-linked (GlcNAc...) asparagine" evidence="3">
    <location>
        <position position="232"/>
    </location>
</feature>
<feature type="glycosylation site" description="N-linked (GlcNAc...) asparagine" evidence="3">
    <location>
        <position position="246"/>
    </location>
</feature>
<feature type="glycosylation site" description="N-linked (GlcNAc...) asparagine" evidence="3">
    <location>
        <position position="271"/>
    </location>
</feature>
<feature type="disulfide bond" evidence="2">
    <location>
        <begin position="57"/>
        <end position="155"/>
    </location>
</feature>
<feature type="disulfide bond" evidence="2">
    <location>
        <begin position="128"/>
        <end position="160"/>
    </location>
</feature>
<feature type="disulfide bond" evidence="2">
    <location>
        <begin position="128"/>
        <end position="147"/>
    </location>
</feature>
<feature type="disulfide bond" evidence="2">
    <location>
        <begin position="160"/>
        <end position="171"/>
    </location>
</feature>
<feature type="disulfide bond" evidence="1">
    <location>
        <begin position="165"/>
        <end position="180"/>
    </location>
</feature>
<feature type="disulfide bond" evidence="2">
    <location>
        <begin position="182"/>
        <end position="191"/>
    </location>
</feature>
<feature type="disulfide bond" evidence="1">
    <location>
        <begin position="197"/>
        <end position="241"/>
    </location>
</feature>
<feature type="disulfide bond" evidence="1">
    <location>
        <begin position="227"/>
        <end position="254"/>
    </location>
</feature>
<feature type="disulfide bond" evidence="1">
    <location>
        <begin position="259"/>
        <end position="303"/>
    </location>
</feature>
<feature type="disulfide bond" evidence="1">
    <location>
        <begin position="289"/>
        <end position="316"/>
    </location>
</feature>